<comment type="function">
    <text evidence="1">Tetrapolymerization of the monopyrrole PBG into the hydroxymethylbilane pre-uroporphyrinogen in several discrete steps.</text>
</comment>
<comment type="catalytic activity">
    <reaction>
        <text>4 porphobilinogen + H2O = hydroxymethylbilane + 4 NH4(+)</text>
        <dbReference type="Rhea" id="RHEA:13185"/>
        <dbReference type="ChEBI" id="CHEBI:15377"/>
        <dbReference type="ChEBI" id="CHEBI:28938"/>
        <dbReference type="ChEBI" id="CHEBI:57845"/>
        <dbReference type="ChEBI" id="CHEBI:58126"/>
        <dbReference type="EC" id="2.5.1.61"/>
    </reaction>
</comment>
<comment type="cofactor">
    <cofactor evidence="1">
        <name>dipyrromethane</name>
        <dbReference type="ChEBI" id="CHEBI:60342"/>
    </cofactor>
    <text evidence="1">Binds 1 dipyrromethane group covalently.</text>
</comment>
<comment type="pathway">
    <text>Porphyrin-containing compound metabolism; protoporphyrin-IX biosynthesis; coproporphyrinogen-III from 5-aminolevulinate: step 2/4.</text>
</comment>
<comment type="subunit">
    <text evidence="1">Monomer.</text>
</comment>
<comment type="miscellaneous">
    <text evidence="1">The porphobilinogen subunits are added to the dipyrromethane group.</text>
</comment>
<comment type="similarity">
    <text evidence="2">Belongs to the HMBS family.</text>
</comment>
<comment type="sequence caution" evidence="2">
    <conflict type="erroneous initiation">
        <sequence resource="EMBL-CDS" id="AAK44754"/>
    </conflict>
</comment>
<dbReference type="EC" id="2.5.1.61"/>
<dbReference type="EMBL" id="AE000516">
    <property type="protein sequence ID" value="AAK44754.1"/>
    <property type="status" value="ALT_INIT"/>
    <property type="molecule type" value="Genomic_DNA"/>
</dbReference>
<dbReference type="PIR" id="A70747">
    <property type="entry name" value="A70747"/>
</dbReference>
<dbReference type="RefSeq" id="WP_003402702.1">
    <property type="nucleotide sequence ID" value="NZ_KK341227.1"/>
</dbReference>
<dbReference type="SMR" id="P9WMP2"/>
<dbReference type="KEGG" id="mtc:MT0531"/>
<dbReference type="PATRIC" id="fig|83331.31.peg.563"/>
<dbReference type="HOGENOM" id="CLU_019704_1_0_11"/>
<dbReference type="UniPathway" id="UPA00251">
    <property type="reaction ID" value="UER00319"/>
</dbReference>
<dbReference type="Proteomes" id="UP000001020">
    <property type="component" value="Chromosome"/>
</dbReference>
<dbReference type="GO" id="GO:0005737">
    <property type="term" value="C:cytoplasm"/>
    <property type="evidence" value="ECO:0007669"/>
    <property type="project" value="TreeGrafter"/>
</dbReference>
<dbReference type="GO" id="GO:0004418">
    <property type="term" value="F:hydroxymethylbilane synthase activity"/>
    <property type="evidence" value="ECO:0007669"/>
    <property type="project" value="UniProtKB-UniRule"/>
</dbReference>
<dbReference type="GO" id="GO:0006782">
    <property type="term" value="P:protoporphyrinogen IX biosynthetic process"/>
    <property type="evidence" value="ECO:0007669"/>
    <property type="project" value="UniProtKB-UniRule"/>
</dbReference>
<dbReference type="CDD" id="cd13646">
    <property type="entry name" value="PBP2_EcHMBS_like"/>
    <property type="match status" value="1"/>
</dbReference>
<dbReference type="FunFam" id="3.30.160.40:FF:000001">
    <property type="entry name" value="Porphobilinogen deaminase"/>
    <property type="match status" value="1"/>
</dbReference>
<dbReference type="FunFam" id="3.40.190.10:FF:000005">
    <property type="entry name" value="Porphobilinogen deaminase"/>
    <property type="match status" value="1"/>
</dbReference>
<dbReference type="Gene3D" id="3.40.190.10">
    <property type="entry name" value="Periplasmic binding protein-like II"/>
    <property type="match status" value="2"/>
</dbReference>
<dbReference type="Gene3D" id="3.30.160.40">
    <property type="entry name" value="Porphobilinogen deaminase, C-terminal domain"/>
    <property type="match status" value="1"/>
</dbReference>
<dbReference type="HAMAP" id="MF_00260">
    <property type="entry name" value="Porphobil_deam"/>
    <property type="match status" value="1"/>
</dbReference>
<dbReference type="InterPro" id="IPR000860">
    <property type="entry name" value="HemC"/>
</dbReference>
<dbReference type="InterPro" id="IPR022419">
    <property type="entry name" value="Porphobilin_deaminase_cofac_BS"/>
</dbReference>
<dbReference type="InterPro" id="IPR022417">
    <property type="entry name" value="Porphobilin_deaminase_N"/>
</dbReference>
<dbReference type="InterPro" id="IPR022418">
    <property type="entry name" value="Porphobilinogen_deaminase_C"/>
</dbReference>
<dbReference type="InterPro" id="IPR036803">
    <property type="entry name" value="Porphobilinogen_deaminase_C_sf"/>
</dbReference>
<dbReference type="NCBIfam" id="TIGR00212">
    <property type="entry name" value="hemC"/>
    <property type="match status" value="1"/>
</dbReference>
<dbReference type="PANTHER" id="PTHR11557">
    <property type="entry name" value="PORPHOBILINOGEN DEAMINASE"/>
    <property type="match status" value="1"/>
</dbReference>
<dbReference type="PANTHER" id="PTHR11557:SF0">
    <property type="entry name" value="PORPHOBILINOGEN DEAMINASE"/>
    <property type="match status" value="1"/>
</dbReference>
<dbReference type="Pfam" id="PF01379">
    <property type="entry name" value="Porphobil_deam"/>
    <property type="match status" value="1"/>
</dbReference>
<dbReference type="Pfam" id="PF03900">
    <property type="entry name" value="Porphobil_deamC"/>
    <property type="match status" value="1"/>
</dbReference>
<dbReference type="PIRSF" id="PIRSF001438">
    <property type="entry name" value="4pyrrol_synth_OHMeBilane_synth"/>
    <property type="match status" value="1"/>
</dbReference>
<dbReference type="PRINTS" id="PR00151">
    <property type="entry name" value="PORPHBDMNASE"/>
</dbReference>
<dbReference type="SUPFAM" id="SSF53850">
    <property type="entry name" value="Periplasmic binding protein-like II"/>
    <property type="match status" value="1"/>
</dbReference>
<dbReference type="SUPFAM" id="SSF54782">
    <property type="entry name" value="Porphobilinogen deaminase (hydroxymethylbilane synthase), C-terminal domain"/>
    <property type="match status" value="1"/>
</dbReference>
<dbReference type="PROSITE" id="PS00533">
    <property type="entry name" value="PORPHOBILINOGEN_DEAM"/>
    <property type="match status" value="1"/>
</dbReference>
<sequence>MIRIGTRGSLLATTQAATVRDALIAGGHSAELVTISTEGDRSMAPIASLGVGVFTTALREAMEAGLVDAAVHSYKDLPTAADPRFTVAAIPPRNDPRDAVVARDGLTLGELPVGSLVGTSSPRRAAQLRALGLGLEIRPLRGNLDTRLNKVSSGDLDAIVVARAGLARLGRLDDVTETLEPVQMLPAPAQGALAVECRAGDSRLVAVLAELDDADTRAAVTAERALLADLEAGCSAPVGAIAEVVESIDEDGRVFEELSLRGCVAALDGSDVIRASGIGSCGRARELGLSVAAELFELGARELMWGVRH</sequence>
<organism>
    <name type="scientific">Mycobacterium tuberculosis (strain CDC 1551 / Oshkosh)</name>
    <dbReference type="NCBI Taxonomy" id="83331"/>
    <lineage>
        <taxon>Bacteria</taxon>
        <taxon>Bacillati</taxon>
        <taxon>Actinomycetota</taxon>
        <taxon>Actinomycetes</taxon>
        <taxon>Mycobacteriales</taxon>
        <taxon>Mycobacteriaceae</taxon>
        <taxon>Mycobacterium</taxon>
        <taxon>Mycobacterium tuberculosis complex</taxon>
    </lineage>
</organism>
<gene>
    <name type="primary">hemC</name>
    <name type="ordered locus">MT0531</name>
</gene>
<keyword id="KW-0627">Porphyrin biosynthesis</keyword>
<keyword id="KW-1185">Reference proteome</keyword>
<keyword id="KW-0808">Transferase</keyword>
<name>HEM3_MYCTO</name>
<feature type="chain" id="PRO_0000427269" description="Porphobilinogen deaminase">
    <location>
        <begin position="1"/>
        <end position="309"/>
    </location>
</feature>
<feature type="modified residue" description="S-(dipyrrolylmethanemethyl)cysteine" evidence="1">
    <location>
        <position position="234"/>
    </location>
</feature>
<reference key="1">
    <citation type="journal article" date="2002" name="J. Bacteriol.">
        <title>Whole-genome comparison of Mycobacterium tuberculosis clinical and laboratory strains.</title>
        <authorList>
            <person name="Fleischmann R.D."/>
            <person name="Alland D."/>
            <person name="Eisen J.A."/>
            <person name="Carpenter L."/>
            <person name="White O."/>
            <person name="Peterson J.D."/>
            <person name="DeBoy R.T."/>
            <person name="Dodson R.J."/>
            <person name="Gwinn M.L."/>
            <person name="Haft D.H."/>
            <person name="Hickey E.K."/>
            <person name="Kolonay J.F."/>
            <person name="Nelson W.C."/>
            <person name="Umayam L.A."/>
            <person name="Ermolaeva M.D."/>
            <person name="Salzberg S.L."/>
            <person name="Delcher A."/>
            <person name="Utterback T.R."/>
            <person name="Weidman J.F."/>
            <person name="Khouri H.M."/>
            <person name="Gill J."/>
            <person name="Mikula A."/>
            <person name="Bishai W."/>
            <person name="Jacobs W.R. Jr."/>
            <person name="Venter J.C."/>
            <person name="Fraser C.M."/>
        </authorList>
    </citation>
    <scope>NUCLEOTIDE SEQUENCE [LARGE SCALE GENOMIC DNA]</scope>
    <source>
        <strain>CDC 1551 / Oshkosh</strain>
    </source>
</reference>
<accession>P9WMP2</accession>
<accession>L0T6W8</accession>
<accession>P64336</accession>
<accession>Q11173</accession>
<evidence type="ECO:0000250" key="1"/>
<evidence type="ECO:0000305" key="2"/>
<protein>
    <recommendedName>
        <fullName>Porphobilinogen deaminase</fullName>
        <shortName>PBG</shortName>
        <ecNumber>2.5.1.61</ecNumber>
    </recommendedName>
    <alternativeName>
        <fullName>Hydroxymethylbilane synthase</fullName>
        <shortName>HMBS</shortName>
    </alternativeName>
    <alternativeName>
        <fullName>Pre-uroporphyrinogen synthase</fullName>
    </alternativeName>
</protein>
<proteinExistence type="inferred from homology"/>